<name>GRPE_BURO0</name>
<evidence type="ECO:0000255" key="1">
    <source>
        <dbReference type="HAMAP-Rule" id="MF_01151"/>
    </source>
</evidence>
<evidence type="ECO:0000256" key="2">
    <source>
        <dbReference type="SAM" id="MobiDB-lite"/>
    </source>
</evidence>
<proteinExistence type="inferred from homology"/>
<protein>
    <recommendedName>
        <fullName evidence="1">Protein GrpE</fullName>
    </recommendedName>
    <alternativeName>
        <fullName evidence="1">HSP-70 cofactor</fullName>
    </alternativeName>
</protein>
<keyword id="KW-0143">Chaperone</keyword>
<keyword id="KW-0963">Cytoplasm</keyword>
<keyword id="KW-0346">Stress response</keyword>
<comment type="function">
    <text evidence="1">Participates actively in the response to hyperosmotic and heat shock by preventing the aggregation of stress-denatured proteins, in association with DnaK and GrpE. It is the nucleotide exchange factor for DnaK and may function as a thermosensor. Unfolded proteins bind initially to DnaJ; upon interaction with the DnaJ-bound protein, DnaK hydrolyzes its bound ATP, resulting in the formation of a stable complex. GrpE releases ADP from DnaK; ATP binding to DnaK triggers the release of the substrate protein, thus completing the reaction cycle. Several rounds of ATP-dependent interactions between DnaJ, DnaK and GrpE are required for fully efficient folding.</text>
</comment>
<comment type="subunit">
    <text evidence="1">Homodimer.</text>
</comment>
<comment type="subcellular location">
    <subcellularLocation>
        <location evidence="1">Cytoplasm</location>
    </subcellularLocation>
</comment>
<comment type="similarity">
    <text evidence="1">Belongs to the GrpE family.</text>
</comment>
<gene>
    <name evidence="1" type="primary">grpE</name>
    <name type="ordered locus">Bcenmc03_0719</name>
</gene>
<reference key="1">
    <citation type="submission" date="2008-02" db="EMBL/GenBank/DDBJ databases">
        <title>Complete sequence of chromosome 1 of Burkholderia cenocepacia MC0-3.</title>
        <authorList>
            <person name="Copeland A."/>
            <person name="Lucas S."/>
            <person name="Lapidus A."/>
            <person name="Barry K."/>
            <person name="Bruce D."/>
            <person name="Goodwin L."/>
            <person name="Glavina del Rio T."/>
            <person name="Dalin E."/>
            <person name="Tice H."/>
            <person name="Pitluck S."/>
            <person name="Chain P."/>
            <person name="Malfatti S."/>
            <person name="Shin M."/>
            <person name="Vergez L."/>
            <person name="Schmutz J."/>
            <person name="Larimer F."/>
            <person name="Land M."/>
            <person name="Hauser L."/>
            <person name="Kyrpides N."/>
            <person name="Mikhailova N."/>
            <person name="Tiedje J."/>
            <person name="Richardson P."/>
        </authorList>
    </citation>
    <scope>NUCLEOTIDE SEQUENCE [LARGE SCALE GENOMIC DNA]</scope>
    <source>
        <strain>MC0-3</strain>
    </source>
</reference>
<dbReference type="EMBL" id="CP000958">
    <property type="protein sequence ID" value="ACA89897.1"/>
    <property type="molecule type" value="Genomic_DNA"/>
</dbReference>
<dbReference type="RefSeq" id="WP_006476840.1">
    <property type="nucleotide sequence ID" value="NC_010508.1"/>
</dbReference>
<dbReference type="SMR" id="B1JW17"/>
<dbReference type="GeneID" id="83047517"/>
<dbReference type="KEGG" id="bcm:Bcenmc03_0719"/>
<dbReference type="HOGENOM" id="CLU_057217_6_1_4"/>
<dbReference type="Proteomes" id="UP000002169">
    <property type="component" value="Chromosome 1"/>
</dbReference>
<dbReference type="GO" id="GO:0005829">
    <property type="term" value="C:cytosol"/>
    <property type="evidence" value="ECO:0007669"/>
    <property type="project" value="TreeGrafter"/>
</dbReference>
<dbReference type="GO" id="GO:0000774">
    <property type="term" value="F:adenyl-nucleotide exchange factor activity"/>
    <property type="evidence" value="ECO:0007669"/>
    <property type="project" value="InterPro"/>
</dbReference>
<dbReference type="GO" id="GO:0042803">
    <property type="term" value="F:protein homodimerization activity"/>
    <property type="evidence" value="ECO:0007669"/>
    <property type="project" value="InterPro"/>
</dbReference>
<dbReference type="GO" id="GO:0051087">
    <property type="term" value="F:protein-folding chaperone binding"/>
    <property type="evidence" value="ECO:0007669"/>
    <property type="project" value="InterPro"/>
</dbReference>
<dbReference type="GO" id="GO:0051082">
    <property type="term" value="F:unfolded protein binding"/>
    <property type="evidence" value="ECO:0007669"/>
    <property type="project" value="TreeGrafter"/>
</dbReference>
<dbReference type="GO" id="GO:0006457">
    <property type="term" value="P:protein folding"/>
    <property type="evidence" value="ECO:0007669"/>
    <property type="project" value="InterPro"/>
</dbReference>
<dbReference type="CDD" id="cd00446">
    <property type="entry name" value="GrpE"/>
    <property type="match status" value="1"/>
</dbReference>
<dbReference type="FunFam" id="2.30.22.10:FF:000001">
    <property type="entry name" value="Protein GrpE"/>
    <property type="match status" value="1"/>
</dbReference>
<dbReference type="Gene3D" id="3.90.20.20">
    <property type="match status" value="1"/>
</dbReference>
<dbReference type="Gene3D" id="2.30.22.10">
    <property type="entry name" value="Head domain of nucleotide exchange factor GrpE"/>
    <property type="match status" value="1"/>
</dbReference>
<dbReference type="HAMAP" id="MF_01151">
    <property type="entry name" value="GrpE"/>
    <property type="match status" value="1"/>
</dbReference>
<dbReference type="InterPro" id="IPR000740">
    <property type="entry name" value="GrpE"/>
</dbReference>
<dbReference type="InterPro" id="IPR013805">
    <property type="entry name" value="GrpE_coiled_coil"/>
</dbReference>
<dbReference type="InterPro" id="IPR009012">
    <property type="entry name" value="GrpE_head"/>
</dbReference>
<dbReference type="NCBIfam" id="NF010737">
    <property type="entry name" value="PRK14139.1"/>
    <property type="match status" value="1"/>
</dbReference>
<dbReference type="NCBIfam" id="NF010738">
    <property type="entry name" value="PRK14140.1"/>
    <property type="match status" value="1"/>
</dbReference>
<dbReference type="NCBIfam" id="NF010748">
    <property type="entry name" value="PRK14150.1"/>
    <property type="match status" value="1"/>
</dbReference>
<dbReference type="PANTHER" id="PTHR21237">
    <property type="entry name" value="GRPE PROTEIN"/>
    <property type="match status" value="1"/>
</dbReference>
<dbReference type="PANTHER" id="PTHR21237:SF23">
    <property type="entry name" value="GRPE PROTEIN HOMOLOG, MITOCHONDRIAL"/>
    <property type="match status" value="1"/>
</dbReference>
<dbReference type="Pfam" id="PF01025">
    <property type="entry name" value="GrpE"/>
    <property type="match status" value="1"/>
</dbReference>
<dbReference type="PRINTS" id="PR00773">
    <property type="entry name" value="GRPEPROTEIN"/>
</dbReference>
<dbReference type="SUPFAM" id="SSF58014">
    <property type="entry name" value="Coiled-coil domain of nucleotide exchange factor GrpE"/>
    <property type="match status" value="1"/>
</dbReference>
<dbReference type="SUPFAM" id="SSF51064">
    <property type="entry name" value="Head domain of nucleotide exchange factor GrpE"/>
    <property type="match status" value="1"/>
</dbReference>
<dbReference type="PROSITE" id="PS01071">
    <property type="entry name" value="GRPE"/>
    <property type="match status" value="1"/>
</dbReference>
<sequence length="181" mass="19398">MENTQENPTTPSAEDIGSEKQAAQGAAPAAEAADAALAEAQAKVAELQESFLRAKAETENVRRRAQDDVSKAHKFAIESFAEHLLPVLDSLEAAVNDTSGDIAKVREGVELTLRQLTSALEKGRVVAINPIGEKFDPHQHQAISMVPAEQEPNTVVSVLQKGYTIADRVLRPALVTVAQPK</sequence>
<organism>
    <name type="scientific">Burkholderia orbicola (strain MC0-3)</name>
    <dbReference type="NCBI Taxonomy" id="406425"/>
    <lineage>
        <taxon>Bacteria</taxon>
        <taxon>Pseudomonadati</taxon>
        <taxon>Pseudomonadota</taxon>
        <taxon>Betaproteobacteria</taxon>
        <taxon>Burkholderiales</taxon>
        <taxon>Burkholderiaceae</taxon>
        <taxon>Burkholderia</taxon>
        <taxon>Burkholderia cepacia complex</taxon>
        <taxon>Burkholderia orbicola</taxon>
    </lineage>
</organism>
<accession>B1JW17</accession>
<feature type="chain" id="PRO_1000137547" description="Protein GrpE">
    <location>
        <begin position="1"/>
        <end position="181"/>
    </location>
</feature>
<feature type="region of interest" description="Disordered" evidence="2">
    <location>
        <begin position="1"/>
        <end position="33"/>
    </location>
</feature>
<feature type="compositionally biased region" description="Polar residues" evidence="2">
    <location>
        <begin position="1"/>
        <end position="12"/>
    </location>
</feature>
<feature type="compositionally biased region" description="Low complexity" evidence="2">
    <location>
        <begin position="21"/>
        <end position="33"/>
    </location>
</feature>